<evidence type="ECO:0000255" key="1">
    <source>
        <dbReference type="HAMAP-Rule" id="MF_01307"/>
    </source>
</evidence>
<evidence type="ECO:0000305" key="2"/>
<reference key="1">
    <citation type="journal article" date="2005" name="Nucleic Acids Res.">
        <title>Genome dynamics and diversity of Shigella species, the etiologic agents of bacillary dysentery.</title>
        <authorList>
            <person name="Yang F."/>
            <person name="Yang J."/>
            <person name="Zhang X."/>
            <person name="Chen L."/>
            <person name="Jiang Y."/>
            <person name="Yan Y."/>
            <person name="Tang X."/>
            <person name="Wang J."/>
            <person name="Xiong Z."/>
            <person name="Dong J."/>
            <person name="Xue Y."/>
            <person name="Zhu Y."/>
            <person name="Xu X."/>
            <person name="Sun L."/>
            <person name="Chen S."/>
            <person name="Nie H."/>
            <person name="Peng J."/>
            <person name="Xu J."/>
            <person name="Wang Y."/>
            <person name="Yuan Z."/>
            <person name="Wen Y."/>
            <person name="Yao Z."/>
            <person name="Shen Y."/>
            <person name="Qiang B."/>
            <person name="Hou Y."/>
            <person name="Yu J."/>
            <person name="Jin Q."/>
        </authorList>
    </citation>
    <scope>NUCLEOTIDE SEQUENCE [LARGE SCALE GENOMIC DNA]</scope>
    <source>
        <strain>Sb227</strain>
    </source>
</reference>
<name>RS5_SHIBS</name>
<keyword id="KW-0687">Ribonucleoprotein</keyword>
<keyword id="KW-0689">Ribosomal protein</keyword>
<keyword id="KW-0694">RNA-binding</keyword>
<keyword id="KW-0699">rRNA-binding</keyword>
<organism>
    <name type="scientific">Shigella boydii serotype 4 (strain Sb227)</name>
    <dbReference type="NCBI Taxonomy" id="300268"/>
    <lineage>
        <taxon>Bacteria</taxon>
        <taxon>Pseudomonadati</taxon>
        <taxon>Pseudomonadota</taxon>
        <taxon>Gammaproteobacteria</taxon>
        <taxon>Enterobacterales</taxon>
        <taxon>Enterobacteriaceae</taxon>
        <taxon>Shigella</taxon>
    </lineage>
</organism>
<gene>
    <name evidence="1" type="primary">rpsE</name>
    <name type="ordered locus">SBO_3297</name>
</gene>
<proteinExistence type="inferred from homology"/>
<dbReference type="EMBL" id="CP000036">
    <property type="protein sequence ID" value="ABB67785.1"/>
    <property type="molecule type" value="Genomic_DNA"/>
</dbReference>
<dbReference type="RefSeq" id="WP_000940121.1">
    <property type="nucleotide sequence ID" value="NC_007613.1"/>
</dbReference>
<dbReference type="SMR" id="Q31VX3"/>
<dbReference type="GeneID" id="93778684"/>
<dbReference type="KEGG" id="sbo:SBO_3297"/>
<dbReference type="HOGENOM" id="CLU_065898_2_2_6"/>
<dbReference type="Proteomes" id="UP000007067">
    <property type="component" value="Chromosome"/>
</dbReference>
<dbReference type="GO" id="GO:0015935">
    <property type="term" value="C:small ribosomal subunit"/>
    <property type="evidence" value="ECO:0007669"/>
    <property type="project" value="InterPro"/>
</dbReference>
<dbReference type="GO" id="GO:0019843">
    <property type="term" value="F:rRNA binding"/>
    <property type="evidence" value="ECO:0007669"/>
    <property type="project" value="UniProtKB-UniRule"/>
</dbReference>
<dbReference type="GO" id="GO:0003735">
    <property type="term" value="F:structural constituent of ribosome"/>
    <property type="evidence" value="ECO:0007669"/>
    <property type="project" value="InterPro"/>
</dbReference>
<dbReference type="GO" id="GO:0006412">
    <property type="term" value="P:translation"/>
    <property type="evidence" value="ECO:0007669"/>
    <property type="project" value="UniProtKB-UniRule"/>
</dbReference>
<dbReference type="FunFam" id="3.30.160.20:FF:000001">
    <property type="entry name" value="30S ribosomal protein S5"/>
    <property type="match status" value="1"/>
</dbReference>
<dbReference type="FunFam" id="3.30.230.10:FF:000002">
    <property type="entry name" value="30S ribosomal protein S5"/>
    <property type="match status" value="1"/>
</dbReference>
<dbReference type="Gene3D" id="3.30.160.20">
    <property type="match status" value="1"/>
</dbReference>
<dbReference type="Gene3D" id="3.30.230.10">
    <property type="match status" value="1"/>
</dbReference>
<dbReference type="HAMAP" id="MF_01307_B">
    <property type="entry name" value="Ribosomal_uS5_B"/>
    <property type="match status" value="1"/>
</dbReference>
<dbReference type="InterPro" id="IPR020568">
    <property type="entry name" value="Ribosomal_Su5_D2-typ_SF"/>
</dbReference>
<dbReference type="InterPro" id="IPR000851">
    <property type="entry name" value="Ribosomal_uS5"/>
</dbReference>
<dbReference type="InterPro" id="IPR005712">
    <property type="entry name" value="Ribosomal_uS5_bac-type"/>
</dbReference>
<dbReference type="InterPro" id="IPR005324">
    <property type="entry name" value="Ribosomal_uS5_C"/>
</dbReference>
<dbReference type="InterPro" id="IPR013810">
    <property type="entry name" value="Ribosomal_uS5_N"/>
</dbReference>
<dbReference type="InterPro" id="IPR018192">
    <property type="entry name" value="Ribosomal_uS5_N_CS"/>
</dbReference>
<dbReference type="InterPro" id="IPR014721">
    <property type="entry name" value="Ribsml_uS5_D2-typ_fold_subgr"/>
</dbReference>
<dbReference type="NCBIfam" id="TIGR01021">
    <property type="entry name" value="rpsE_bact"/>
    <property type="match status" value="1"/>
</dbReference>
<dbReference type="PANTHER" id="PTHR48277">
    <property type="entry name" value="MITOCHONDRIAL RIBOSOMAL PROTEIN S5"/>
    <property type="match status" value="1"/>
</dbReference>
<dbReference type="PANTHER" id="PTHR48277:SF1">
    <property type="entry name" value="MITOCHONDRIAL RIBOSOMAL PROTEIN S5"/>
    <property type="match status" value="1"/>
</dbReference>
<dbReference type="Pfam" id="PF00333">
    <property type="entry name" value="Ribosomal_S5"/>
    <property type="match status" value="1"/>
</dbReference>
<dbReference type="Pfam" id="PF03719">
    <property type="entry name" value="Ribosomal_S5_C"/>
    <property type="match status" value="1"/>
</dbReference>
<dbReference type="SUPFAM" id="SSF54768">
    <property type="entry name" value="dsRNA-binding domain-like"/>
    <property type="match status" value="1"/>
</dbReference>
<dbReference type="SUPFAM" id="SSF54211">
    <property type="entry name" value="Ribosomal protein S5 domain 2-like"/>
    <property type="match status" value="1"/>
</dbReference>
<dbReference type="PROSITE" id="PS00585">
    <property type="entry name" value="RIBOSOMAL_S5"/>
    <property type="match status" value="1"/>
</dbReference>
<dbReference type="PROSITE" id="PS50881">
    <property type="entry name" value="S5_DSRBD"/>
    <property type="match status" value="1"/>
</dbReference>
<sequence length="167" mass="17603">MAHIEKQAGELQEKLIAVNRVSKTVKGGRIFSFTALTVVGDGNGRVGFGYGKAREVPAAIQKAMEKARRNMINVALNNGTLQHPVKGVHTGSRVFMQPASEGTGIIAGGAMRAVLEVAGVHNVLAKAYGSTNPINVVRATIDGLENMNSPEMVAAKRGKSVEEILGK</sequence>
<comment type="function">
    <text evidence="1">With S4 and S12 plays an important role in translational accuracy.</text>
</comment>
<comment type="function">
    <text evidence="1">Located at the back of the 30S subunit body where it stabilizes the conformation of the head with respect to the body.</text>
</comment>
<comment type="subunit">
    <text evidence="1">Part of the 30S ribosomal subunit. Contacts proteins S4 and S8.</text>
</comment>
<comment type="domain">
    <text>The N-terminal domain interacts with the head of the 30S subunit; the C-terminal domain interacts with the body and contacts protein S4. The interaction surface between S4 and S5 is involved in control of translational fidelity.</text>
</comment>
<comment type="similarity">
    <text evidence="1">Belongs to the universal ribosomal protein uS5 family.</text>
</comment>
<accession>Q31VX3</accession>
<protein>
    <recommendedName>
        <fullName evidence="1">Small ribosomal subunit protein uS5</fullName>
    </recommendedName>
    <alternativeName>
        <fullName evidence="2">30S ribosomal protein S5</fullName>
    </alternativeName>
</protein>
<feature type="chain" id="PRO_0000230368" description="Small ribosomal subunit protein uS5">
    <location>
        <begin position="1"/>
        <end position="167"/>
    </location>
</feature>
<feature type="domain" description="S5 DRBM" evidence="1">
    <location>
        <begin position="11"/>
        <end position="74"/>
    </location>
</feature>